<evidence type="ECO:0000269" key="1">
    <source>
    </source>
</evidence>
<evidence type="ECO:0000305" key="2"/>
<accession>Q5BFM4</accession>
<accession>C8VRZ7</accession>
<organism>
    <name type="scientific">Emericella nidulans (strain FGSC A4 / ATCC 38163 / CBS 112.46 / NRRL 194 / M139)</name>
    <name type="common">Aspergillus nidulans</name>
    <dbReference type="NCBI Taxonomy" id="227321"/>
    <lineage>
        <taxon>Eukaryota</taxon>
        <taxon>Fungi</taxon>
        <taxon>Dikarya</taxon>
        <taxon>Ascomycota</taxon>
        <taxon>Pezizomycotina</taxon>
        <taxon>Eurotiomycetes</taxon>
        <taxon>Eurotiomycetidae</taxon>
        <taxon>Eurotiales</taxon>
        <taxon>Aspergillaceae</taxon>
        <taxon>Aspergillus</taxon>
        <taxon>Aspergillus subgen. Nidulantes</taxon>
    </lineage>
</organism>
<proteinExistence type="evidence at protein level"/>
<keyword id="KW-0489">Methyltransferase</keyword>
<keyword id="KW-1185">Reference proteome</keyword>
<keyword id="KW-0346">Stress response</keyword>
<keyword id="KW-0808">Transferase</keyword>
<feature type="chain" id="PRO_0000363401" description="Uncharacterized methyltransferase AN0656">
    <location>
        <begin position="1"/>
        <end position="286"/>
    </location>
</feature>
<gene>
    <name type="ORF">AN0656</name>
</gene>
<sequence>MTNQTIQEALGHGQGNDLGNSDGHRIEYVETIEAYNKWAEVYDTDGNFLQALDTFEMKDLLPRFLCLVQTQTNGKSNMTPGEQVLKLVDLGCGTGRNTLQLAKSAPKEAQIIGLDASPGMLEVAEGNLKAQGVMGTVDERRVVLGVYDLLSPRPESLPVSLRGEARASGAISTLVLEHIPLDKFFEGAARLIRPGGYLLVTNMHAEMGAISQAGFVDVTSGKKIRPTSYAHEVGNVIAAAERAGFEIVPLNGAEKVRERRVNEEMVALLGSRARKWVNVVVWFGLS</sequence>
<name>Y0656_EMENI</name>
<protein>
    <recommendedName>
        <fullName>Uncharacterized methyltransferase AN0656</fullName>
        <ecNumber>2.1.1.-</ecNumber>
    </recommendedName>
</protein>
<dbReference type="EC" id="2.1.1.-"/>
<dbReference type="EMBL" id="AACD01000010">
    <property type="protein sequence ID" value="EAA65432.1"/>
    <property type="molecule type" value="Genomic_DNA"/>
</dbReference>
<dbReference type="EMBL" id="BN001308">
    <property type="protein sequence ID" value="CBF89047.1"/>
    <property type="molecule type" value="Genomic_DNA"/>
</dbReference>
<dbReference type="RefSeq" id="XP_658260.1">
    <property type="nucleotide sequence ID" value="XM_653168.1"/>
</dbReference>
<dbReference type="SMR" id="Q5BFM4"/>
<dbReference type="EnsemblFungi" id="CBF89047">
    <property type="protein sequence ID" value="CBF89047"/>
    <property type="gene ID" value="ANIA_00656"/>
</dbReference>
<dbReference type="KEGG" id="ani:ANIA_00656"/>
<dbReference type="VEuPathDB" id="FungiDB:AN0656"/>
<dbReference type="eggNOG" id="ENOG502S3GB">
    <property type="taxonomic scope" value="Eukaryota"/>
</dbReference>
<dbReference type="HOGENOM" id="CLU_072385_0_0_1"/>
<dbReference type="InParanoid" id="Q5BFM4"/>
<dbReference type="OMA" id="TNMHSEM"/>
<dbReference type="OrthoDB" id="66144at2759"/>
<dbReference type="Proteomes" id="UP000000560">
    <property type="component" value="Chromosome VIII"/>
</dbReference>
<dbReference type="GO" id="GO:0008168">
    <property type="term" value="F:methyltransferase activity"/>
    <property type="evidence" value="ECO:0000318"/>
    <property type="project" value="GO_Central"/>
</dbReference>
<dbReference type="GO" id="GO:0008757">
    <property type="term" value="F:S-adenosylmethionine-dependent methyltransferase activity"/>
    <property type="evidence" value="ECO:0007669"/>
    <property type="project" value="InterPro"/>
</dbReference>
<dbReference type="GO" id="GO:0071470">
    <property type="term" value="P:cellular response to osmotic stress"/>
    <property type="evidence" value="ECO:0000270"/>
    <property type="project" value="AspGD"/>
</dbReference>
<dbReference type="GO" id="GO:0032259">
    <property type="term" value="P:methylation"/>
    <property type="evidence" value="ECO:0007669"/>
    <property type="project" value="UniProtKB-KW"/>
</dbReference>
<dbReference type="CDD" id="cd02440">
    <property type="entry name" value="AdoMet_MTases"/>
    <property type="match status" value="1"/>
</dbReference>
<dbReference type="FunFam" id="3.40.50.150:FF:000960">
    <property type="match status" value="1"/>
</dbReference>
<dbReference type="Gene3D" id="3.40.50.150">
    <property type="entry name" value="Vaccinia Virus protein VP39"/>
    <property type="match status" value="1"/>
</dbReference>
<dbReference type="InterPro" id="IPR013216">
    <property type="entry name" value="Methyltransf_11"/>
</dbReference>
<dbReference type="InterPro" id="IPR029063">
    <property type="entry name" value="SAM-dependent_MTases_sf"/>
</dbReference>
<dbReference type="PANTHER" id="PTHR43861">
    <property type="entry name" value="TRANS-ACONITATE 2-METHYLTRANSFERASE-RELATED"/>
    <property type="match status" value="1"/>
</dbReference>
<dbReference type="Pfam" id="PF08241">
    <property type="entry name" value="Methyltransf_11"/>
    <property type="match status" value="1"/>
</dbReference>
<dbReference type="SUPFAM" id="SSF53335">
    <property type="entry name" value="S-adenosyl-L-methionine-dependent methyltransferases"/>
    <property type="match status" value="1"/>
</dbReference>
<reference key="1">
    <citation type="journal article" date="2005" name="Nature">
        <title>Sequencing of Aspergillus nidulans and comparative analysis with A. fumigatus and A. oryzae.</title>
        <authorList>
            <person name="Galagan J.E."/>
            <person name="Calvo S.E."/>
            <person name="Cuomo C."/>
            <person name="Ma L.-J."/>
            <person name="Wortman J.R."/>
            <person name="Batzoglou S."/>
            <person name="Lee S.-I."/>
            <person name="Bastuerkmen M."/>
            <person name="Spevak C.C."/>
            <person name="Clutterbuck J."/>
            <person name="Kapitonov V."/>
            <person name="Jurka J."/>
            <person name="Scazzocchio C."/>
            <person name="Farman M.L."/>
            <person name="Butler J."/>
            <person name="Purcell S."/>
            <person name="Harris S."/>
            <person name="Braus G.H."/>
            <person name="Draht O."/>
            <person name="Busch S."/>
            <person name="D'Enfert C."/>
            <person name="Bouchier C."/>
            <person name="Goldman G.H."/>
            <person name="Bell-Pedersen D."/>
            <person name="Griffiths-Jones S."/>
            <person name="Doonan J.H."/>
            <person name="Yu J."/>
            <person name="Vienken K."/>
            <person name="Pain A."/>
            <person name="Freitag M."/>
            <person name="Selker E.U."/>
            <person name="Archer D.B."/>
            <person name="Penalva M.A."/>
            <person name="Oakley B.R."/>
            <person name="Momany M."/>
            <person name="Tanaka T."/>
            <person name="Kumagai T."/>
            <person name="Asai K."/>
            <person name="Machida M."/>
            <person name="Nierman W.C."/>
            <person name="Denning D.W."/>
            <person name="Caddick M.X."/>
            <person name="Hynes M."/>
            <person name="Paoletti M."/>
            <person name="Fischer R."/>
            <person name="Miller B.L."/>
            <person name="Dyer P.S."/>
            <person name="Sachs M.S."/>
            <person name="Osmani S.A."/>
            <person name="Birren B.W."/>
        </authorList>
    </citation>
    <scope>NUCLEOTIDE SEQUENCE [LARGE SCALE GENOMIC DNA]</scope>
    <source>
        <strain>FGSC A4 / ATCC 38163 / CBS 112.46 / NRRL 194 / M139</strain>
    </source>
</reference>
<reference key="2">
    <citation type="journal article" date="2009" name="Fungal Genet. Biol.">
        <title>The 2008 update of the Aspergillus nidulans genome annotation: a community effort.</title>
        <authorList>
            <person name="Wortman J.R."/>
            <person name="Gilsenan J.M."/>
            <person name="Joardar V."/>
            <person name="Deegan J."/>
            <person name="Clutterbuck J."/>
            <person name="Andersen M.R."/>
            <person name="Archer D."/>
            <person name="Bencina M."/>
            <person name="Braus G."/>
            <person name="Coutinho P."/>
            <person name="von Dohren H."/>
            <person name="Doonan J."/>
            <person name="Driessen A.J."/>
            <person name="Durek P."/>
            <person name="Espeso E."/>
            <person name="Fekete E."/>
            <person name="Flipphi M."/>
            <person name="Estrada C.G."/>
            <person name="Geysens S."/>
            <person name="Goldman G."/>
            <person name="de Groot P.W."/>
            <person name="Hansen K."/>
            <person name="Harris S.D."/>
            <person name="Heinekamp T."/>
            <person name="Helmstaedt K."/>
            <person name="Henrissat B."/>
            <person name="Hofmann G."/>
            <person name="Homan T."/>
            <person name="Horio T."/>
            <person name="Horiuchi H."/>
            <person name="James S."/>
            <person name="Jones M."/>
            <person name="Karaffa L."/>
            <person name="Karanyi Z."/>
            <person name="Kato M."/>
            <person name="Keller N."/>
            <person name="Kelly D.E."/>
            <person name="Kiel J.A."/>
            <person name="Kim J.M."/>
            <person name="van der Klei I.J."/>
            <person name="Klis F.M."/>
            <person name="Kovalchuk A."/>
            <person name="Krasevec N."/>
            <person name="Kubicek C.P."/>
            <person name="Liu B."/>
            <person name="Maccabe A."/>
            <person name="Meyer V."/>
            <person name="Mirabito P."/>
            <person name="Miskei M."/>
            <person name="Mos M."/>
            <person name="Mullins J."/>
            <person name="Nelson D.R."/>
            <person name="Nielsen J."/>
            <person name="Oakley B.R."/>
            <person name="Osmani S.A."/>
            <person name="Pakula T."/>
            <person name="Paszewski A."/>
            <person name="Paulsen I."/>
            <person name="Pilsyk S."/>
            <person name="Pocsi I."/>
            <person name="Punt P.J."/>
            <person name="Ram A.F."/>
            <person name="Ren Q."/>
            <person name="Robellet X."/>
            <person name="Robson G."/>
            <person name="Seiboth B."/>
            <person name="van Solingen P."/>
            <person name="Specht T."/>
            <person name="Sun J."/>
            <person name="Taheri-Talesh N."/>
            <person name="Takeshita N."/>
            <person name="Ussery D."/>
            <person name="vanKuyk P.A."/>
            <person name="Visser H."/>
            <person name="van de Vondervoort P.J."/>
            <person name="de Vries R.P."/>
            <person name="Walton J."/>
            <person name="Xiang X."/>
            <person name="Xiong Y."/>
            <person name="Zeng A.P."/>
            <person name="Brandt B.W."/>
            <person name="Cornell M.J."/>
            <person name="van den Hondel C.A."/>
            <person name="Visser J."/>
            <person name="Oliver S.G."/>
            <person name="Turner G."/>
        </authorList>
    </citation>
    <scope>GENOME REANNOTATION</scope>
    <source>
        <strain>FGSC A4 / ATCC 38163 / CBS 112.46 / NRRL 194 / M139</strain>
    </source>
</reference>
<reference key="3">
    <citation type="journal article" date="2007" name="Fungal Genet. Biol.">
        <title>Proteome map of Aspergillus nidulans during osmoadaptation.</title>
        <authorList>
            <person name="Kim Y."/>
            <person name="Nandakumar M.P."/>
            <person name="Marten M.R."/>
        </authorList>
    </citation>
    <scope>INDUCTION</scope>
    <scope>IDENTIFICATION BY MASS SPECTROMETRY</scope>
</reference>
<comment type="function">
    <text>Involved in osmoadaptation.</text>
</comment>
<comment type="induction">
    <text evidence="1">Down-regulated when grown with elevated levels of potassium chloride.</text>
</comment>
<comment type="similarity">
    <text evidence="2">Belongs to the methyltransferase superfamily.</text>
</comment>